<evidence type="ECO:0000255" key="1">
    <source>
        <dbReference type="HAMAP-Rule" id="MF_00409"/>
    </source>
</evidence>
<protein>
    <recommendedName>
        <fullName evidence="1">Tetraacyldisaccharide 4'-kinase</fullName>
        <ecNumber evidence="1">2.7.1.130</ecNumber>
    </recommendedName>
    <alternativeName>
        <fullName evidence="1">Lipid A 4'-kinase</fullName>
    </alternativeName>
</protein>
<sequence>MIEKIWSGESPLWRLLLPLSWLYGLVSGAIRLCYKLKLKRAWRAPVPVVVVGNLTAGGNGKTPVVVWLVEQLQQRGIRVGVVSRGYGGKAESYPLLLSADTTTAQAGDEPVLIYQRTDAPVAVSPVRSDAVKAILAQHPDVQIIVTDDGLQHYRLARDVEIVVIDGVRRFGNGWWLPAGPMRERAGRLKSVDAVIVNGGVPRSGEIPMHLLPGQAVNLRTGTRCDVAQLEHVVAMAGIGHPPRFFATLKMCGVQPEKCVPLADHQSLNHADVSALVSTGQTLVMTEKDAVKCRAFAEENWWYLPVDAQLSGDEPAKLLTQLTSLASGN</sequence>
<proteinExistence type="inferred from homology"/>
<comment type="function">
    <text evidence="1">Transfers the gamma-phosphate of ATP to the 4'-position of a tetraacyldisaccharide 1-phosphate intermediate (termed DS-1-P) to form tetraacyldisaccharide 1,4'-bis-phosphate (lipid IVA).</text>
</comment>
<comment type="catalytic activity">
    <reaction evidence="1">
        <text>a lipid A disaccharide + ATP = a lipid IVA + ADP + H(+)</text>
        <dbReference type="Rhea" id="RHEA:67840"/>
        <dbReference type="ChEBI" id="CHEBI:15378"/>
        <dbReference type="ChEBI" id="CHEBI:30616"/>
        <dbReference type="ChEBI" id="CHEBI:176343"/>
        <dbReference type="ChEBI" id="CHEBI:176425"/>
        <dbReference type="ChEBI" id="CHEBI:456216"/>
        <dbReference type="EC" id="2.7.1.130"/>
    </reaction>
</comment>
<comment type="pathway">
    <text evidence="1">Glycolipid biosynthesis; lipid IV(A) biosynthesis; lipid IV(A) from (3R)-3-hydroxytetradecanoyl-[acyl-carrier-protein] and UDP-N-acetyl-alpha-D-glucosamine: step 6/6.</text>
</comment>
<comment type="similarity">
    <text evidence="1">Belongs to the LpxK family.</text>
</comment>
<gene>
    <name evidence="1" type="primary">lpxK</name>
    <name type="ordered locus">EcE24377A_1013</name>
</gene>
<name>LPXK_ECO24</name>
<feature type="chain" id="PRO_1000123703" description="Tetraacyldisaccharide 4'-kinase">
    <location>
        <begin position="1"/>
        <end position="328"/>
    </location>
</feature>
<feature type="binding site" evidence="1">
    <location>
        <begin position="55"/>
        <end position="62"/>
    </location>
    <ligand>
        <name>ATP</name>
        <dbReference type="ChEBI" id="CHEBI:30616"/>
    </ligand>
</feature>
<organism>
    <name type="scientific">Escherichia coli O139:H28 (strain E24377A / ETEC)</name>
    <dbReference type="NCBI Taxonomy" id="331111"/>
    <lineage>
        <taxon>Bacteria</taxon>
        <taxon>Pseudomonadati</taxon>
        <taxon>Pseudomonadota</taxon>
        <taxon>Gammaproteobacteria</taxon>
        <taxon>Enterobacterales</taxon>
        <taxon>Enterobacteriaceae</taxon>
        <taxon>Escherichia</taxon>
    </lineage>
</organism>
<keyword id="KW-0067">ATP-binding</keyword>
<keyword id="KW-0418">Kinase</keyword>
<keyword id="KW-0441">Lipid A biosynthesis</keyword>
<keyword id="KW-0444">Lipid biosynthesis</keyword>
<keyword id="KW-0443">Lipid metabolism</keyword>
<keyword id="KW-0547">Nucleotide-binding</keyword>
<keyword id="KW-1185">Reference proteome</keyword>
<keyword id="KW-0808">Transferase</keyword>
<dbReference type="EC" id="2.7.1.130" evidence="1"/>
<dbReference type="EMBL" id="CP000800">
    <property type="protein sequence ID" value="ABV21139.1"/>
    <property type="molecule type" value="Genomic_DNA"/>
</dbReference>
<dbReference type="RefSeq" id="WP_000570542.1">
    <property type="nucleotide sequence ID" value="NC_009801.1"/>
</dbReference>
<dbReference type="SMR" id="A7ZK04"/>
<dbReference type="GeneID" id="75205317"/>
<dbReference type="KEGG" id="ecw:EcE24377A_1013"/>
<dbReference type="HOGENOM" id="CLU_038816_2_0_6"/>
<dbReference type="UniPathway" id="UPA00359">
    <property type="reaction ID" value="UER00482"/>
</dbReference>
<dbReference type="Proteomes" id="UP000001122">
    <property type="component" value="Chromosome"/>
</dbReference>
<dbReference type="GO" id="GO:0005886">
    <property type="term" value="C:plasma membrane"/>
    <property type="evidence" value="ECO:0007669"/>
    <property type="project" value="TreeGrafter"/>
</dbReference>
<dbReference type="GO" id="GO:0005524">
    <property type="term" value="F:ATP binding"/>
    <property type="evidence" value="ECO:0007669"/>
    <property type="project" value="UniProtKB-UniRule"/>
</dbReference>
<dbReference type="GO" id="GO:0009029">
    <property type="term" value="F:tetraacyldisaccharide 4'-kinase activity"/>
    <property type="evidence" value="ECO:0007669"/>
    <property type="project" value="UniProtKB-UniRule"/>
</dbReference>
<dbReference type="GO" id="GO:0009245">
    <property type="term" value="P:lipid A biosynthetic process"/>
    <property type="evidence" value="ECO:0007669"/>
    <property type="project" value="UniProtKB-UniRule"/>
</dbReference>
<dbReference type="GO" id="GO:0009244">
    <property type="term" value="P:lipopolysaccharide core region biosynthetic process"/>
    <property type="evidence" value="ECO:0007669"/>
    <property type="project" value="TreeGrafter"/>
</dbReference>
<dbReference type="HAMAP" id="MF_00409">
    <property type="entry name" value="LpxK"/>
    <property type="match status" value="1"/>
</dbReference>
<dbReference type="InterPro" id="IPR003758">
    <property type="entry name" value="LpxK"/>
</dbReference>
<dbReference type="InterPro" id="IPR027417">
    <property type="entry name" value="P-loop_NTPase"/>
</dbReference>
<dbReference type="NCBIfam" id="TIGR00682">
    <property type="entry name" value="lpxK"/>
    <property type="match status" value="1"/>
</dbReference>
<dbReference type="PANTHER" id="PTHR42724">
    <property type="entry name" value="TETRAACYLDISACCHARIDE 4'-KINASE"/>
    <property type="match status" value="1"/>
</dbReference>
<dbReference type="PANTHER" id="PTHR42724:SF1">
    <property type="entry name" value="TETRAACYLDISACCHARIDE 4'-KINASE, MITOCHONDRIAL-RELATED"/>
    <property type="match status" value="1"/>
</dbReference>
<dbReference type="Pfam" id="PF02606">
    <property type="entry name" value="LpxK"/>
    <property type="match status" value="1"/>
</dbReference>
<dbReference type="SUPFAM" id="SSF52540">
    <property type="entry name" value="P-loop containing nucleoside triphosphate hydrolases"/>
    <property type="match status" value="1"/>
</dbReference>
<reference key="1">
    <citation type="journal article" date="2008" name="J. Bacteriol.">
        <title>The pangenome structure of Escherichia coli: comparative genomic analysis of E. coli commensal and pathogenic isolates.</title>
        <authorList>
            <person name="Rasko D.A."/>
            <person name="Rosovitz M.J."/>
            <person name="Myers G.S.A."/>
            <person name="Mongodin E.F."/>
            <person name="Fricke W.F."/>
            <person name="Gajer P."/>
            <person name="Crabtree J."/>
            <person name="Sebaihia M."/>
            <person name="Thomson N.R."/>
            <person name="Chaudhuri R."/>
            <person name="Henderson I.R."/>
            <person name="Sperandio V."/>
            <person name="Ravel J."/>
        </authorList>
    </citation>
    <scope>NUCLEOTIDE SEQUENCE [LARGE SCALE GENOMIC DNA]</scope>
    <source>
        <strain>E24377A / ETEC</strain>
    </source>
</reference>
<accession>A7ZK04</accession>